<feature type="chain" id="PRO_0000293142" description="Uncharacterized glycosyltransferase RT0209">
    <location>
        <begin position="1"/>
        <end position="292"/>
    </location>
</feature>
<protein>
    <recommendedName>
        <fullName>Uncharacterized glycosyltransferase RT0209</fullName>
        <ecNumber>2.4.-.-</ecNumber>
    </recommendedName>
</protein>
<reference key="1">
    <citation type="journal article" date="2004" name="J. Bacteriol.">
        <title>Complete genome sequence of Rickettsia typhi and comparison with sequences of other Rickettsiae.</title>
        <authorList>
            <person name="McLeod M.P."/>
            <person name="Qin X."/>
            <person name="Karpathy S.E."/>
            <person name="Gioia J."/>
            <person name="Highlander S.K."/>
            <person name="Fox G.E."/>
            <person name="McNeill T.Z."/>
            <person name="Jiang H."/>
            <person name="Muzny D."/>
            <person name="Jacob L.S."/>
            <person name="Hawes A.C."/>
            <person name="Sodergren E."/>
            <person name="Gill R."/>
            <person name="Hume J."/>
            <person name="Morgan M."/>
            <person name="Fan G."/>
            <person name="Amin A.G."/>
            <person name="Gibbs R.A."/>
            <person name="Hong C."/>
            <person name="Yu X.-J."/>
            <person name="Walker D.H."/>
            <person name="Weinstock G.M."/>
        </authorList>
    </citation>
    <scope>NUCLEOTIDE SEQUENCE [LARGE SCALE GENOMIC DNA]</scope>
    <source>
        <strain>ATCC VR-144 / Wilmington</strain>
    </source>
</reference>
<accession>Q68XF1</accession>
<comment type="similarity">
    <text evidence="1">Belongs to the glycosyltransferase 2 family. WaaE/KdtX subfamily.</text>
</comment>
<evidence type="ECO:0000305" key="1"/>
<gene>
    <name type="ordered locus">RT0209</name>
</gene>
<organism>
    <name type="scientific">Rickettsia typhi (strain ATCC VR-144 / Wilmington)</name>
    <dbReference type="NCBI Taxonomy" id="257363"/>
    <lineage>
        <taxon>Bacteria</taxon>
        <taxon>Pseudomonadati</taxon>
        <taxon>Pseudomonadota</taxon>
        <taxon>Alphaproteobacteria</taxon>
        <taxon>Rickettsiales</taxon>
        <taxon>Rickettsiaceae</taxon>
        <taxon>Rickettsieae</taxon>
        <taxon>Rickettsia</taxon>
        <taxon>typhus group</taxon>
    </lineage>
</organism>
<sequence length="292" mass="33996">MKKISTFIITKNEEARIARAINSVKNITDEVIVVDNESTDDTVHIAKTLGAKVIVKPWLGYVGQKSFAESMCVNDWVLNIDADEELSQELQDEIEYIFASHNQDRYLAYQIKLLIMYRGDQKSRMFAPLNKCIRLYNKKFASFANTINSTTHDSVVFNKDVDFIGKIYLLNGIAYHYSGTSIEQLVNKANFYSSEQAKDLVKQGKKFSNFRLATEMIWWFLKAFFIRRYFVFGFDGFVDSIIFAFARFLRLAKLRELSLKSRNVIASDNYINYCMDIKSLLQKKKRSRYPKK</sequence>
<proteinExistence type="inferred from homology"/>
<dbReference type="EC" id="2.4.-.-"/>
<dbReference type="EMBL" id="AE017197">
    <property type="protein sequence ID" value="AAU03691.1"/>
    <property type="molecule type" value="Genomic_DNA"/>
</dbReference>
<dbReference type="RefSeq" id="WP_011190677.1">
    <property type="nucleotide sequence ID" value="NC_006142.1"/>
</dbReference>
<dbReference type="SMR" id="Q68XF1"/>
<dbReference type="CAZy" id="GT2">
    <property type="family name" value="Glycosyltransferase Family 2"/>
</dbReference>
<dbReference type="KEGG" id="rty:RT0209"/>
<dbReference type="eggNOG" id="COG0463">
    <property type="taxonomic scope" value="Bacteria"/>
</dbReference>
<dbReference type="HOGENOM" id="CLU_065962_1_0_5"/>
<dbReference type="OrthoDB" id="7527830at2"/>
<dbReference type="Proteomes" id="UP000000604">
    <property type="component" value="Chromosome"/>
</dbReference>
<dbReference type="GO" id="GO:0016757">
    <property type="term" value="F:glycosyltransferase activity"/>
    <property type="evidence" value="ECO:0007669"/>
    <property type="project" value="UniProtKB-KW"/>
</dbReference>
<dbReference type="CDD" id="cd02511">
    <property type="entry name" value="Beta4Glucosyltransferase"/>
    <property type="match status" value="1"/>
</dbReference>
<dbReference type="Gene3D" id="3.90.550.10">
    <property type="entry name" value="Spore Coat Polysaccharide Biosynthesis Protein SpsA, Chain A"/>
    <property type="match status" value="1"/>
</dbReference>
<dbReference type="InterPro" id="IPR001173">
    <property type="entry name" value="Glyco_trans_2-like"/>
</dbReference>
<dbReference type="InterPro" id="IPR029044">
    <property type="entry name" value="Nucleotide-diphossugar_trans"/>
</dbReference>
<dbReference type="PANTHER" id="PTHR43630:SF2">
    <property type="entry name" value="GLYCOSYLTRANSFERASE"/>
    <property type="match status" value="1"/>
</dbReference>
<dbReference type="PANTHER" id="PTHR43630">
    <property type="entry name" value="POLY-BETA-1,6-N-ACETYL-D-GLUCOSAMINE SYNTHASE"/>
    <property type="match status" value="1"/>
</dbReference>
<dbReference type="Pfam" id="PF00535">
    <property type="entry name" value="Glycos_transf_2"/>
    <property type="match status" value="1"/>
</dbReference>
<dbReference type="SUPFAM" id="SSF53448">
    <property type="entry name" value="Nucleotide-diphospho-sugar transferases"/>
    <property type="match status" value="1"/>
</dbReference>
<name>Y209_RICTY</name>
<keyword id="KW-0328">Glycosyltransferase</keyword>
<keyword id="KW-0808">Transferase</keyword>